<name>TSAD_LISMO</name>
<proteinExistence type="inferred from homology"/>
<protein>
    <recommendedName>
        <fullName evidence="1">tRNA N6-adenosine threonylcarbamoyltransferase</fullName>
        <ecNumber evidence="1">2.3.1.234</ecNumber>
    </recommendedName>
    <alternativeName>
        <fullName evidence="1">N6-L-threonylcarbamoyladenine synthase</fullName>
        <shortName evidence="1">t(6)A synthase</shortName>
    </alternativeName>
    <alternativeName>
        <fullName evidence="1">t(6)A37 threonylcarbamoyladenosine biosynthesis protein TsaD</fullName>
    </alternativeName>
    <alternativeName>
        <fullName evidence="1">tRNA threonylcarbamoyladenosine biosynthesis protein TsaD</fullName>
    </alternativeName>
</protein>
<evidence type="ECO:0000255" key="1">
    <source>
        <dbReference type="HAMAP-Rule" id="MF_01445"/>
    </source>
</evidence>
<reference key="1">
    <citation type="journal article" date="2001" name="Science">
        <title>Comparative genomics of Listeria species.</title>
        <authorList>
            <person name="Glaser P."/>
            <person name="Frangeul L."/>
            <person name="Buchrieser C."/>
            <person name="Rusniok C."/>
            <person name="Amend A."/>
            <person name="Baquero F."/>
            <person name="Berche P."/>
            <person name="Bloecker H."/>
            <person name="Brandt P."/>
            <person name="Chakraborty T."/>
            <person name="Charbit A."/>
            <person name="Chetouani F."/>
            <person name="Couve E."/>
            <person name="de Daruvar A."/>
            <person name="Dehoux P."/>
            <person name="Domann E."/>
            <person name="Dominguez-Bernal G."/>
            <person name="Duchaud E."/>
            <person name="Durant L."/>
            <person name="Dussurget O."/>
            <person name="Entian K.-D."/>
            <person name="Fsihi H."/>
            <person name="Garcia-del Portillo F."/>
            <person name="Garrido P."/>
            <person name="Gautier L."/>
            <person name="Goebel W."/>
            <person name="Gomez-Lopez N."/>
            <person name="Hain T."/>
            <person name="Hauf J."/>
            <person name="Jackson D."/>
            <person name="Jones L.-M."/>
            <person name="Kaerst U."/>
            <person name="Kreft J."/>
            <person name="Kuhn M."/>
            <person name="Kunst F."/>
            <person name="Kurapkat G."/>
            <person name="Madueno E."/>
            <person name="Maitournam A."/>
            <person name="Mata Vicente J."/>
            <person name="Ng E."/>
            <person name="Nedjari H."/>
            <person name="Nordsiek G."/>
            <person name="Novella S."/>
            <person name="de Pablos B."/>
            <person name="Perez-Diaz J.-C."/>
            <person name="Purcell R."/>
            <person name="Remmel B."/>
            <person name="Rose M."/>
            <person name="Schlueter T."/>
            <person name="Simoes N."/>
            <person name="Tierrez A."/>
            <person name="Vazquez-Boland J.-A."/>
            <person name="Voss H."/>
            <person name="Wehland J."/>
            <person name="Cossart P."/>
        </authorList>
    </citation>
    <scope>NUCLEOTIDE SEQUENCE [LARGE SCALE GENOMIC DNA]</scope>
    <source>
        <strain>ATCC BAA-679 / EGD-e</strain>
    </source>
</reference>
<dbReference type="EC" id="2.3.1.234" evidence="1"/>
<dbReference type="EMBL" id="AL591982">
    <property type="protein sequence ID" value="CAD00153.1"/>
    <property type="molecule type" value="Genomic_DNA"/>
</dbReference>
<dbReference type="PIR" id="AC1334">
    <property type="entry name" value="AC1334"/>
</dbReference>
<dbReference type="RefSeq" id="NP_465599.2">
    <property type="nucleotide sequence ID" value="NC_003210.1"/>
</dbReference>
<dbReference type="SMR" id="Q8Y5I7"/>
<dbReference type="STRING" id="169963.gene:17594760"/>
<dbReference type="PaxDb" id="169963-lmo2075"/>
<dbReference type="DNASU" id="984790"/>
<dbReference type="EnsemblBacteria" id="CAD00153">
    <property type="protein sequence ID" value="CAD00153"/>
    <property type="gene ID" value="CAD00153"/>
</dbReference>
<dbReference type="GeneID" id="984790"/>
<dbReference type="KEGG" id="lmo:lmo2075"/>
<dbReference type="PATRIC" id="fig|169963.11.peg.2125"/>
<dbReference type="eggNOG" id="COG0533">
    <property type="taxonomic scope" value="Bacteria"/>
</dbReference>
<dbReference type="HOGENOM" id="CLU_023208_0_2_9"/>
<dbReference type="OrthoDB" id="9806197at2"/>
<dbReference type="PhylomeDB" id="Q8Y5I7"/>
<dbReference type="Proteomes" id="UP000000817">
    <property type="component" value="Chromosome"/>
</dbReference>
<dbReference type="GO" id="GO:0005737">
    <property type="term" value="C:cytoplasm"/>
    <property type="evidence" value="ECO:0007669"/>
    <property type="project" value="UniProtKB-SubCell"/>
</dbReference>
<dbReference type="GO" id="GO:0005506">
    <property type="term" value="F:iron ion binding"/>
    <property type="evidence" value="ECO:0007669"/>
    <property type="project" value="UniProtKB-UniRule"/>
</dbReference>
<dbReference type="GO" id="GO:0061711">
    <property type="term" value="F:N(6)-L-threonylcarbamoyladenine synthase activity"/>
    <property type="evidence" value="ECO:0007669"/>
    <property type="project" value="UniProtKB-EC"/>
</dbReference>
<dbReference type="GO" id="GO:0002949">
    <property type="term" value="P:tRNA threonylcarbamoyladenosine modification"/>
    <property type="evidence" value="ECO:0007669"/>
    <property type="project" value="UniProtKB-UniRule"/>
</dbReference>
<dbReference type="CDD" id="cd24133">
    <property type="entry name" value="ASKHA_NBD_TsaD_bac"/>
    <property type="match status" value="1"/>
</dbReference>
<dbReference type="FunFam" id="3.30.420.40:FF:000012">
    <property type="entry name" value="tRNA N6-adenosine threonylcarbamoyltransferase"/>
    <property type="match status" value="1"/>
</dbReference>
<dbReference type="FunFam" id="3.30.420.40:FF:000040">
    <property type="entry name" value="tRNA N6-adenosine threonylcarbamoyltransferase"/>
    <property type="match status" value="1"/>
</dbReference>
<dbReference type="Gene3D" id="3.30.420.40">
    <property type="match status" value="2"/>
</dbReference>
<dbReference type="HAMAP" id="MF_01445">
    <property type="entry name" value="TsaD"/>
    <property type="match status" value="1"/>
</dbReference>
<dbReference type="InterPro" id="IPR043129">
    <property type="entry name" value="ATPase_NBD"/>
</dbReference>
<dbReference type="InterPro" id="IPR000905">
    <property type="entry name" value="Gcp-like_dom"/>
</dbReference>
<dbReference type="InterPro" id="IPR017861">
    <property type="entry name" value="KAE1/TsaD"/>
</dbReference>
<dbReference type="InterPro" id="IPR017860">
    <property type="entry name" value="Peptidase_M22_CS"/>
</dbReference>
<dbReference type="InterPro" id="IPR022450">
    <property type="entry name" value="TsaD"/>
</dbReference>
<dbReference type="NCBIfam" id="TIGR00329">
    <property type="entry name" value="gcp_kae1"/>
    <property type="match status" value="1"/>
</dbReference>
<dbReference type="NCBIfam" id="TIGR03723">
    <property type="entry name" value="T6A_TsaD_YgjD"/>
    <property type="match status" value="1"/>
</dbReference>
<dbReference type="PANTHER" id="PTHR11735">
    <property type="entry name" value="TRNA N6-ADENOSINE THREONYLCARBAMOYLTRANSFERASE"/>
    <property type="match status" value="1"/>
</dbReference>
<dbReference type="PANTHER" id="PTHR11735:SF6">
    <property type="entry name" value="TRNA N6-ADENOSINE THREONYLCARBAMOYLTRANSFERASE, MITOCHONDRIAL"/>
    <property type="match status" value="1"/>
</dbReference>
<dbReference type="Pfam" id="PF00814">
    <property type="entry name" value="TsaD"/>
    <property type="match status" value="1"/>
</dbReference>
<dbReference type="PRINTS" id="PR00789">
    <property type="entry name" value="OSIALOPTASE"/>
</dbReference>
<dbReference type="SUPFAM" id="SSF53067">
    <property type="entry name" value="Actin-like ATPase domain"/>
    <property type="match status" value="2"/>
</dbReference>
<dbReference type="PROSITE" id="PS01016">
    <property type="entry name" value="GLYCOPROTEASE"/>
    <property type="match status" value="1"/>
</dbReference>
<sequence length="344" mass="36860">MGGLMKKNTLILGIESSCDETAASVVKNGNEIISSVVASQIESHKRFGGVVPEIASRHHVEQITLVIEEALKQANVTMDDLDGVAVTEGPGLVGALLIGVNAAKTLAFMHNLPLVGVHHIAGHIYANRFETEFKFPLLSLVVSGGHTELVLMKADNEFEIIGETRDDAAGEAYDKVARTLGLAYPGGVQIDKLAKDGEDTFHFPRAMMDEGSFDFSFSGLKSSFINTLHNLRQRGEEPNPNDMAASFQASVVDVLVSKTIRAAKQYDVKQLLLAGGVAANQGLRERLIQEVKLELPETELIIPPLALCGDNAAMIAAAGTVSFLQGKRSGFDMNANPGLLLEDI</sequence>
<gene>
    <name evidence="1" type="primary">tsaD</name>
    <name type="synonym">gcp</name>
    <name type="ordered locus">lmo2075</name>
</gene>
<organism>
    <name type="scientific">Listeria monocytogenes serovar 1/2a (strain ATCC BAA-679 / EGD-e)</name>
    <dbReference type="NCBI Taxonomy" id="169963"/>
    <lineage>
        <taxon>Bacteria</taxon>
        <taxon>Bacillati</taxon>
        <taxon>Bacillota</taxon>
        <taxon>Bacilli</taxon>
        <taxon>Bacillales</taxon>
        <taxon>Listeriaceae</taxon>
        <taxon>Listeria</taxon>
    </lineage>
</organism>
<accession>Q8Y5I7</accession>
<keyword id="KW-0012">Acyltransferase</keyword>
<keyword id="KW-0963">Cytoplasm</keyword>
<keyword id="KW-0408">Iron</keyword>
<keyword id="KW-0479">Metal-binding</keyword>
<keyword id="KW-1185">Reference proteome</keyword>
<keyword id="KW-0808">Transferase</keyword>
<keyword id="KW-0819">tRNA processing</keyword>
<comment type="function">
    <text evidence="1">Required for the formation of a threonylcarbamoyl group on adenosine at position 37 (t(6)A37) in tRNAs that read codons beginning with adenine. Is involved in the transfer of the threonylcarbamoyl moiety of threonylcarbamoyl-AMP (TC-AMP) to the N6 group of A37, together with TsaE and TsaB. TsaD likely plays a direct catalytic role in this reaction.</text>
</comment>
<comment type="catalytic activity">
    <reaction evidence="1">
        <text>L-threonylcarbamoyladenylate + adenosine(37) in tRNA = N(6)-L-threonylcarbamoyladenosine(37) in tRNA + AMP + H(+)</text>
        <dbReference type="Rhea" id="RHEA:37059"/>
        <dbReference type="Rhea" id="RHEA-COMP:10162"/>
        <dbReference type="Rhea" id="RHEA-COMP:10163"/>
        <dbReference type="ChEBI" id="CHEBI:15378"/>
        <dbReference type="ChEBI" id="CHEBI:73682"/>
        <dbReference type="ChEBI" id="CHEBI:74411"/>
        <dbReference type="ChEBI" id="CHEBI:74418"/>
        <dbReference type="ChEBI" id="CHEBI:456215"/>
        <dbReference type="EC" id="2.3.1.234"/>
    </reaction>
</comment>
<comment type="cofactor">
    <cofactor evidence="1">
        <name>Fe(2+)</name>
        <dbReference type="ChEBI" id="CHEBI:29033"/>
    </cofactor>
    <text evidence="1">Binds 1 Fe(2+) ion per subunit.</text>
</comment>
<comment type="subcellular location">
    <subcellularLocation>
        <location evidence="1">Cytoplasm</location>
    </subcellularLocation>
</comment>
<comment type="similarity">
    <text evidence="1">Belongs to the KAE1 / TsaD family.</text>
</comment>
<feature type="chain" id="PRO_0000303413" description="tRNA N6-adenosine threonylcarbamoyltransferase">
    <location>
        <begin position="1"/>
        <end position="344"/>
    </location>
</feature>
<feature type="binding site" evidence="1">
    <location>
        <position position="119"/>
    </location>
    <ligand>
        <name>Fe cation</name>
        <dbReference type="ChEBI" id="CHEBI:24875"/>
    </ligand>
</feature>
<feature type="binding site" evidence="1">
    <location>
        <position position="123"/>
    </location>
    <ligand>
        <name>Fe cation</name>
        <dbReference type="ChEBI" id="CHEBI:24875"/>
    </ligand>
</feature>
<feature type="binding site" evidence="1">
    <location>
        <begin position="141"/>
        <end position="145"/>
    </location>
    <ligand>
        <name>substrate</name>
    </ligand>
</feature>
<feature type="binding site" evidence="1">
    <location>
        <position position="174"/>
    </location>
    <ligand>
        <name>substrate</name>
    </ligand>
</feature>
<feature type="binding site" evidence="1">
    <location>
        <position position="187"/>
    </location>
    <ligand>
        <name>substrate</name>
    </ligand>
</feature>
<feature type="binding site" evidence="1">
    <location>
        <position position="191"/>
    </location>
    <ligand>
        <name>substrate</name>
    </ligand>
</feature>
<feature type="binding site" evidence="1">
    <location>
        <position position="280"/>
    </location>
    <ligand>
        <name>substrate</name>
    </ligand>
</feature>
<feature type="binding site" evidence="1">
    <location>
        <position position="310"/>
    </location>
    <ligand>
        <name>Fe cation</name>
        <dbReference type="ChEBI" id="CHEBI:24875"/>
    </ligand>
</feature>